<dbReference type="EC" id="2.1.1.107" evidence="1"/>
<dbReference type="EC" id="1.3.1.76" evidence="1"/>
<dbReference type="EC" id="4.99.1.4" evidence="1"/>
<dbReference type="EMBL" id="CP000282">
    <property type="protein sequence ID" value="ABD80958.1"/>
    <property type="molecule type" value="Genomic_DNA"/>
</dbReference>
<dbReference type="RefSeq" id="WP_011468178.1">
    <property type="nucleotide sequence ID" value="NC_007912.1"/>
</dbReference>
<dbReference type="SMR" id="Q21K21"/>
<dbReference type="STRING" id="203122.Sde_1698"/>
<dbReference type="GeneID" id="98613373"/>
<dbReference type="KEGG" id="sde:Sde_1698"/>
<dbReference type="eggNOG" id="COG0007">
    <property type="taxonomic scope" value="Bacteria"/>
</dbReference>
<dbReference type="eggNOG" id="COG1648">
    <property type="taxonomic scope" value="Bacteria"/>
</dbReference>
<dbReference type="HOGENOM" id="CLU_011276_2_1_6"/>
<dbReference type="OrthoDB" id="9815856at2"/>
<dbReference type="UniPathway" id="UPA00148">
    <property type="reaction ID" value="UER00211"/>
</dbReference>
<dbReference type="UniPathway" id="UPA00148">
    <property type="reaction ID" value="UER00222"/>
</dbReference>
<dbReference type="UniPathway" id="UPA00262">
    <property type="reaction ID" value="UER00211"/>
</dbReference>
<dbReference type="UniPathway" id="UPA00262">
    <property type="reaction ID" value="UER00222"/>
</dbReference>
<dbReference type="UniPathway" id="UPA00262">
    <property type="reaction ID" value="UER00376"/>
</dbReference>
<dbReference type="Proteomes" id="UP000001947">
    <property type="component" value="Chromosome"/>
</dbReference>
<dbReference type="GO" id="GO:0051287">
    <property type="term" value="F:NAD binding"/>
    <property type="evidence" value="ECO:0007669"/>
    <property type="project" value="InterPro"/>
</dbReference>
<dbReference type="GO" id="GO:0043115">
    <property type="term" value="F:precorrin-2 dehydrogenase activity"/>
    <property type="evidence" value="ECO:0007669"/>
    <property type="project" value="UniProtKB-UniRule"/>
</dbReference>
<dbReference type="GO" id="GO:0051266">
    <property type="term" value="F:sirohydrochlorin ferrochelatase activity"/>
    <property type="evidence" value="ECO:0007669"/>
    <property type="project" value="UniProtKB-EC"/>
</dbReference>
<dbReference type="GO" id="GO:0004851">
    <property type="term" value="F:uroporphyrin-III C-methyltransferase activity"/>
    <property type="evidence" value="ECO:0007669"/>
    <property type="project" value="UniProtKB-UniRule"/>
</dbReference>
<dbReference type="GO" id="GO:0009236">
    <property type="term" value="P:cobalamin biosynthetic process"/>
    <property type="evidence" value="ECO:0007669"/>
    <property type="project" value="UniProtKB-UniRule"/>
</dbReference>
<dbReference type="GO" id="GO:0032259">
    <property type="term" value="P:methylation"/>
    <property type="evidence" value="ECO:0007669"/>
    <property type="project" value="UniProtKB-KW"/>
</dbReference>
<dbReference type="GO" id="GO:0019354">
    <property type="term" value="P:siroheme biosynthetic process"/>
    <property type="evidence" value="ECO:0007669"/>
    <property type="project" value="UniProtKB-UniRule"/>
</dbReference>
<dbReference type="CDD" id="cd11642">
    <property type="entry name" value="SUMT"/>
    <property type="match status" value="1"/>
</dbReference>
<dbReference type="FunFam" id="3.30.950.10:FF:000001">
    <property type="entry name" value="Siroheme synthase"/>
    <property type="match status" value="1"/>
</dbReference>
<dbReference type="FunFam" id="3.40.1010.10:FF:000001">
    <property type="entry name" value="Siroheme synthase"/>
    <property type="match status" value="1"/>
</dbReference>
<dbReference type="Gene3D" id="3.40.1010.10">
    <property type="entry name" value="Cobalt-precorrin-4 Transmethylase, Domain 1"/>
    <property type="match status" value="1"/>
</dbReference>
<dbReference type="Gene3D" id="3.30.950.10">
    <property type="entry name" value="Methyltransferase, Cobalt-precorrin-4 Transmethylase, Domain 2"/>
    <property type="match status" value="1"/>
</dbReference>
<dbReference type="Gene3D" id="3.40.50.720">
    <property type="entry name" value="NAD(P)-binding Rossmann-like Domain"/>
    <property type="match status" value="1"/>
</dbReference>
<dbReference type="Gene3D" id="1.10.8.210">
    <property type="entry name" value="Sirohaem synthase, dimerisation domain"/>
    <property type="match status" value="1"/>
</dbReference>
<dbReference type="Gene3D" id="3.30.160.110">
    <property type="entry name" value="Siroheme synthase, domain 2"/>
    <property type="match status" value="1"/>
</dbReference>
<dbReference type="HAMAP" id="MF_01646">
    <property type="entry name" value="Siroheme_synth"/>
    <property type="match status" value="1"/>
</dbReference>
<dbReference type="InterPro" id="IPR000878">
    <property type="entry name" value="4pyrrol_Mease"/>
</dbReference>
<dbReference type="InterPro" id="IPR035996">
    <property type="entry name" value="4pyrrol_Methylase_sf"/>
</dbReference>
<dbReference type="InterPro" id="IPR014777">
    <property type="entry name" value="4pyrrole_Mease_sub1"/>
</dbReference>
<dbReference type="InterPro" id="IPR014776">
    <property type="entry name" value="4pyrrole_Mease_sub2"/>
</dbReference>
<dbReference type="InterPro" id="IPR006366">
    <property type="entry name" value="CobA/CysG_C"/>
</dbReference>
<dbReference type="InterPro" id="IPR036291">
    <property type="entry name" value="NAD(P)-bd_dom_sf"/>
</dbReference>
<dbReference type="InterPro" id="IPR050161">
    <property type="entry name" value="Siro_Cobalamin_biosynth"/>
</dbReference>
<dbReference type="InterPro" id="IPR037115">
    <property type="entry name" value="Sirohaem_synt_dimer_dom_sf"/>
</dbReference>
<dbReference type="InterPro" id="IPR012409">
    <property type="entry name" value="Sirohaem_synth"/>
</dbReference>
<dbReference type="InterPro" id="IPR019478">
    <property type="entry name" value="Sirohaem_synthase_dimer_dom"/>
</dbReference>
<dbReference type="InterPro" id="IPR006367">
    <property type="entry name" value="Sirohaem_synthase_N"/>
</dbReference>
<dbReference type="InterPro" id="IPR003043">
    <property type="entry name" value="Uropor_MeTrfase_CS"/>
</dbReference>
<dbReference type="NCBIfam" id="TIGR01469">
    <property type="entry name" value="cobA_cysG_Cterm"/>
    <property type="match status" value="1"/>
</dbReference>
<dbReference type="NCBIfam" id="TIGR01470">
    <property type="entry name" value="cysG_Nterm"/>
    <property type="match status" value="1"/>
</dbReference>
<dbReference type="NCBIfam" id="NF004790">
    <property type="entry name" value="PRK06136.1"/>
    <property type="match status" value="1"/>
</dbReference>
<dbReference type="NCBIfam" id="NF007922">
    <property type="entry name" value="PRK10637.1"/>
    <property type="match status" value="1"/>
</dbReference>
<dbReference type="PANTHER" id="PTHR45790:SF1">
    <property type="entry name" value="SIROHEME SYNTHASE"/>
    <property type="match status" value="1"/>
</dbReference>
<dbReference type="PANTHER" id="PTHR45790">
    <property type="entry name" value="SIROHEME SYNTHASE-RELATED"/>
    <property type="match status" value="1"/>
</dbReference>
<dbReference type="Pfam" id="PF10414">
    <property type="entry name" value="CysG_dimeriser"/>
    <property type="match status" value="1"/>
</dbReference>
<dbReference type="Pfam" id="PF13241">
    <property type="entry name" value="NAD_binding_7"/>
    <property type="match status" value="1"/>
</dbReference>
<dbReference type="Pfam" id="PF00590">
    <property type="entry name" value="TP_methylase"/>
    <property type="match status" value="1"/>
</dbReference>
<dbReference type="PIRSF" id="PIRSF036426">
    <property type="entry name" value="Sirohaem_synth"/>
    <property type="match status" value="1"/>
</dbReference>
<dbReference type="SUPFAM" id="SSF51735">
    <property type="entry name" value="NAD(P)-binding Rossmann-fold domains"/>
    <property type="match status" value="1"/>
</dbReference>
<dbReference type="SUPFAM" id="SSF75615">
    <property type="entry name" value="Siroheme synthase middle domains-like"/>
    <property type="match status" value="1"/>
</dbReference>
<dbReference type="SUPFAM" id="SSF53790">
    <property type="entry name" value="Tetrapyrrole methylase"/>
    <property type="match status" value="1"/>
</dbReference>
<dbReference type="PROSITE" id="PS00840">
    <property type="entry name" value="SUMT_2"/>
    <property type="match status" value="1"/>
</dbReference>
<name>CYSG_SACD2</name>
<protein>
    <recommendedName>
        <fullName evidence="1">Siroheme synthase</fullName>
    </recommendedName>
    <domain>
        <recommendedName>
            <fullName evidence="1">Uroporphyrinogen-III C-methyltransferase</fullName>
            <shortName evidence="1">Urogen III methylase</shortName>
            <ecNumber evidence="1">2.1.1.107</ecNumber>
        </recommendedName>
        <alternativeName>
            <fullName evidence="1">SUMT</fullName>
        </alternativeName>
        <alternativeName>
            <fullName evidence="1">Uroporphyrinogen III methylase</fullName>
            <shortName evidence="1">UROM</shortName>
        </alternativeName>
    </domain>
    <domain>
        <recommendedName>
            <fullName evidence="1">Precorrin-2 dehydrogenase</fullName>
            <ecNumber evidence="1">1.3.1.76</ecNumber>
        </recommendedName>
    </domain>
    <domain>
        <recommendedName>
            <fullName evidence="1">Sirohydrochlorin ferrochelatase</fullName>
            <ecNumber evidence="1">4.99.1.4</ecNumber>
        </recommendedName>
    </domain>
</protein>
<accession>Q21K21</accession>
<proteinExistence type="inferred from homology"/>
<comment type="function">
    <text evidence="1">Multifunctional enzyme that catalyzes the SAM-dependent methylations of uroporphyrinogen III at position C-2 and C-7 to form precorrin-2 via precorrin-1. Then it catalyzes the NAD-dependent ring dehydrogenation of precorrin-2 to yield sirohydrochlorin. Finally, it catalyzes the ferrochelation of sirohydrochlorin to yield siroheme.</text>
</comment>
<comment type="catalytic activity">
    <reaction evidence="1">
        <text>uroporphyrinogen III + 2 S-adenosyl-L-methionine = precorrin-2 + 2 S-adenosyl-L-homocysteine + H(+)</text>
        <dbReference type="Rhea" id="RHEA:32459"/>
        <dbReference type="ChEBI" id="CHEBI:15378"/>
        <dbReference type="ChEBI" id="CHEBI:57308"/>
        <dbReference type="ChEBI" id="CHEBI:57856"/>
        <dbReference type="ChEBI" id="CHEBI:58827"/>
        <dbReference type="ChEBI" id="CHEBI:59789"/>
        <dbReference type="EC" id="2.1.1.107"/>
    </reaction>
</comment>
<comment type="catalytic activity">
    <reaction evidence="1">
        <text>precorrin-2 + NAD(+) = sirohydrochlorin + NADH + 2 H(+)</text>
        <dbReference type="Rhea" id="RHEA:15613"/>
        <dbReference type="ChEBI" id="CHEBI:15378"/>
        <dbReference type="ChEBI" id="CHEBI:57540"/>
        <dbReference type="ChEBI" id="CHEBI:57945"/>
        <dbReference type="ChEBI" id="CHEBI:58351"/>
        <dbReference type="ChEBI" id="CHEBI:58827"/>
        <dbReference type="EC" id="1.3.1.76"/>
    </reaction>
</comment>
<comment type="catalytic activity">
    <reaction evidence="1">
        <text>siroheme + 2 H(+) = sirohydrochlorin + Fe(2+)</text>
        <dbReference type="Rhea" id="RHEA:24360"/>
        <dbReference type="ChEBI" id="CHEBI:15378"/>
        <dbReference type="ChEBI" id="CHEBI:29033"/>
        <dbReference type="ChEBI" id="CHEBI:58351"/>
        <dbReference type="ChEBI" id="CHEBI:60052"/>
        <dbReference type="EC" id="4.99.1.4"/>
    </reaction>
</comment>
<comment type="pathway">
    <text evidence="1">Cofactor biosynthesis; adenosylcobalamin biosynthesis; precorrin-2 from uroporphyrinogen III: step 1/1.</text>
</comment>
<comment type="pathway">
    <text evidence="1">Cofactor biosynthesis; adenosylcobalamin biosynthesis; sirohydrochlorin from precorrin-2: step 1/1.</text>
</comment>
<comment type="pathway">
    <text evidence="1">Porphyrin-containing compound metabolism; siroheme biosynthesis; precorrin-2 from uroporphyrinogen III: step 1/1.</text>
</comment>
<comment type="pathway">
    <text evidence="1">Porphyrin-containing compound metabolism; siroheme biosynthesis; siroheme from sirohydrochlorin: step 1/1.</text>
</comment>
<comment type="pathway">
    <text evidence="1">Porphyrin-containing compound metabolism; siroheme biosynthesis; sirohydrochlorin from precorrin-2: step 1/1.</text>
</comment>
<comment type="similarity">
    <text evidence="1">In the N-terminal section; belongs to the precorrin-2 dehydrogenase / sirohydrochlorin ferrochelatase family.</text>
</comment>
<comment type="similarity">
    <text evidence="1">In the C-terminal section; belongs to the precorrin methyltransferase family.</text>
</comment>
<reference key="1">
    <citation type="journal article" date="2008" name="PLoS Genet.">
        <title>Complete genome sequence of the complex carbohydrate-degrading marine bacterium, Saccharophagus degradans strain 2-40 T.</title>
        <authorList>
            <person name="Weiner R.M."/>
            <person name="Taylor L.E. II"/>
            <person name="Henrissat B."/>
            <person name="Hauser L."/>
            <person name="Land M."/>
            <person name="Coutinho P.M."/>
            <person name="Rancurel C."/>
            <person name="Saunders E.H."/>
            <person name="Longmire A.G."/>
            <person name="Zhang H."/>
            <person name="Bayer E.A."/>
            <person name="Gilbert H.J."/>
            <person name="Larimer F."/>
            <person name="Zhulin I.B."/>
            <person name="Ekborg N.A."/>
            <person name="Lamed R."/>
            <person name="Richardson P.M."/>
            <person name="Borovok I."/>
            <person name="Hutcheson S."/>
        </authorList>
    </citation>
    <scope>NUCLEOTIDE SEQUENCE [LARGE SCALE GENOMIC DNA]</scope>
    <source>
        <strain>2-40 / ATCC 43961 / DSM 17024</strain>
    </source>
</reference>
<feature type="chain" id="PRO_0000330551" description="Siroheme synthase">
    <location>
        <begin position="1"/>
        <end position="458"/>
    </location>
</feature>
<feature type="region of interest" description="Precorrin-2 dehydrogenase /sirohydrochlorin ferrochelatase" evidence="1">
    <location>
        <begin position="1"/>
        <end position="203"/>
    </location>
</feature>
<feature type="region of interest" description="Uroporphyrinogen-III C-methyltransferase" evidence="1">
    <location>
        <begin position="216"/>
        <end position="458"/>
    </location>
</feature>
<feature type="active site" description="Proton acceptor" evidence="1">
    <location>
        <position position="248"/>
    </location>
</feature>
<feature type="active site" description="Proton donor" evidence="1">
    <location>
        <position position="270"/>
    </location>
</feature>
<feature type="binding site" evidence="1">
    <location>
        <begin position="22"/>
        <end position="23"/>
    </location>
    <ligand>
        <name>NAD(+)</name>
        <dbReference type="ChEBI" id="CHEBI:57540"/>
    </ligand>
</feature>
<feature type="binding site" evidence="1">
    <location>
        <begin position="43"/>
        <end position="44"/>
    </location>
    <ligand>
        <name>NAD(+)</name>
        <dbReference type="ChEBI" id="CHEBI:57540"/>
    </ligand>
</feature>
<feature type="binding site" evidence="1">
    <location>
        <position position="225"/>
    </location>
    <ligand>
        <name>S-adenosyl-L-methionine</name>
        <dbReference type="ChEBI" id="CHEBI:59789"/>
    </ligand>
</feature>
<feature type="binding site" evidence="1">
    <location>
        <begin position="301"/>
        <end position="303"/>
    </location>
    <ligand>
        <name>S-adenosyl-L-methionine</name>
        <dbReference type="ChEBI" id="CHEBI:59789"/>
    </ligand>
</feature>
<feature type="binding site" evidence="1">
    <location>
        <position position="306"/>
    </location>
    <ligand>
        <name>S-adenosyl-L-methionine</name>
        <dbReference type="ChEBI" id="CHEBI:59789"/>
    </ligand>
</feature>
<feature type="binding site" evidence="1">
    <location>
        <begin position="331"/>
        <end position="332"/>
    </location>
    <ligand>
        <name>S-adenosyl-L-methionine</name>
        <dbReference type="ChEBI" id="CHEBI:59789"/>
    </ligand>
</feature>
<feature type="binding site" evidence="1">
    <location>
        <position position="383"/>
    </location>
    <ligand>
        <name>S-adenosyl-L-methionine</name>
        <dbReference type="ChEBI" id="CHEBI:59789"/>
    </ligand>
</feature>
<feature type="binding site" evidence="1">
    <location>
        <position position="412"/>
    </location>
    <ligand>
        <name>S-adenosyl-L-methionine</name>
        <dbReference type="ChEBI" id="CHEBI:59789"/>
    </ligand>
</feature>
<feature type="modified residue" description="Phosphoserine" evidence="1">
    <location>
        <position position="128"/>
    </location>
</feature>
<sequence>MDYLPLFFDLKAKPCLIVGGGTIATRKARLLHKAGAKLHVVAPKVSEELEKLVAASNGKVFKQEYDQTFLDDVILVISATDIDAVNSVVAADCHAIKLPVNVVDSPALCSVIMPAIIDRSPLIIGVTSGGEAPVLARRVRSMLESSIPAAYGQLAQLASKFRQRAKDVFENGDLRRRFWENILNGPIAEKVLGGNLAAAEQLIEAQLDSASVEKTGEVYLVGAGPGDPDLLTFKALRLMQQAEVVLYDRLVSEPILEMTRRDAERIYVGKKRAEHAVPQQKINQMLLELAQQGKRVLRLKGGDPFIFGRGGEEIDLLAEHKIPFQVVPGITAASGCASYSGIPLTHRDYSQSVRFITGHLQEGKENFRWSEFVDKQQTLVFYMGLAGLETICSKLIEYGKSPSTPAALIERGTLPEQRVHVSDLAGLAAKIEGLDVHAPTLLIIGDVVRCHEKLNWYK</sequence>
<keyword id="KW-0169">Cobalamin biosynthesis</keyword>
<keyword id="KW-0456">Lyase</keyword>
<keyword id="KW-0489">Methyltransferase</keyword>
<keyword id="KW-0511">Multifunctional enzyme</keyword>
<keyword id="KW-0520">NAD</keyword>
<keyword id="KW-0560">Oxidoreductase</keyword>
<keyword id="KW-0597">Phosphoprotein</keyword>
<keyword id="KW-0627">Porphyrin biosynthesis</keyword>
<keyword id="KW-1185">Reference proteome</keyword>
<keyword id="KW-0949">S-adenosyl-L-methionine</keyword>
<keyword id="KW-0808">Transferase</keyword>
<evidence type="ECO:0000255" key="1">
    <source>
        <dbReference type="HAMAP-Rule" id="MF_01646"/>
    </source>
</evidence>
<gene>
    <name evidence="1" type="primary">cysG</name>
    <name type="ordered locus">Sde_1698</name>
</gene>
<organism>
    <name type="scientific">Saccharophagus degradans (strain 2-40 / ATCC 43961 / DSM 17024)</name>
    <dbReference type="NCBI Taxonomy" id="203122"/>
    <lineage>
        <taxon>Bacteria</taxon>
        <taxon>Pseudomonadati</taxon>
        <taxon>Pseudomonadota</taxon>
        <taxon>Gammaproteobacteria</taxon>
        <taxon>Cellvibrionales</taxon>
        <taxon>Cellvibrionaceae</taxon>
        <taxon>Saccharophagus</taxon>
    </lineage>
</organism>